<proteinExistence type="inferred from homology"/>
<evidence type="ECO:0000255" key="1">
    <source>
        <dbReference type="HAMAP-Rule" id="MF_00321"/>
    </source>
</evidence>
<sequence>MNYSKAKYIMGAAKVSQLPEDTGVEVAFAGRSNAGKSSALNTLTDQKGLARVSKTPGRTQLINLFDLGNNNRLVDLPGYGYAKVSESIKRQWQSEMENYLTSRKCLNGIVLLVDSRHELKEFDSLMIEMAISFDLNLHILLTKADKLNNKERAQANRMIESFLKTFVSTDKISYQLFSSLTKMGLDKFKEKLDTWYQ</sequence>
<comment type="function">
    <text evidence="1">Necessary for normal cell division and for the maintenance of normal septation.</text>
</comment>
<comment type="cofactor">
    <cofactor evidence="1">
        <name>Mg(2+)</name>
        <dbReference type="ChEBI" id="CHEBI:18420"/>
    </cofactor>
</comment>
<comment type="similarity">
    <text evidence="1">Belongs to the TRAFAC class TrmE-Era-EngA-EngB-Septin-like GTPase superfamily. EngB GTPase family.</text>
</comment>
<protein>
    <recommendedName>
        <fullName evidence="1">Probable GTP-binding protein EngB</fullName>
    </recommendedName>
</protein>
<feature type="chain" id="PRO_1000005812" description="Probable GTP-binding protein EngB">
    <location>
        <begin position="1"/>
        <end position="197"/>
    </location>
</feature>
<feature type="domain" description="EngB-type G" evidence="1">
    <location>
        <begin position="22"/>
        <end position="197"/>
    </location>
</feature>
<feature type="binding site" evidence="1">
    <location>
        <begin position="30"/>
        <end position="37"/>
    </location>
    <ligand>
        <name>GTP</name>
        <dbReference type="ChEBI" id="CHEBI:37565"/>
    </ligand>
</feature>
<feature type="binding site" evidence="1">
    <location>
        <position position="37"/>
    </location>
    <ligand>
        <name>Mg(2+)</name>
        <dbReference type="ChEBI" id="CHEBI:18420"/>
    </ligand>
</feature>
<feature type="binding site" evidence="1">
    <location>
        <begin position="57"/>
        <end position="61"/>
    </location>
    <ligand>
        <name>GTP</name>
        <dbReference type="ChEBI" id="CHEBI:37565"/>
    </ligand>
</feature>
<feature type="binding site" evidence="1">
    <location>
        <position position="59"/>
    </location>
    <ligand>
        <name>Mg(2+)</name>
        <dbReference type="ChEBI" id="CHEBI:18420"/>
    </ligand>
</feature>
<feature type="binding site" evidence="1">
    <location>
        <begin position="75"/>
        <end position="78"/>
    </location>
    <ligand>
        <name>GTP</name>
        <dbReference type="ChEBI" id="CHEBI:37565"/>
    </ligand>
</feature>
<feature type="binding site" evidence="1">
    <location>
        <begin position="142"/>
        <end position="145"/>
    </location>
    <ligand>
        <name>GTP</name>
        <dbReference type="ChEBI" id="CHEBI:37565"/>
    </ligand>
</feature>
<feature type="binding site" evidence="1">
    <location>
        <begin position="177"/>
        <end position="179"/>
    </location>
    <ligand>
        <name>GTP</name>
        <dbReference type="ChEBI" id="CHEBI:37565"/>
    </ligand>
</feature>
<organism>
    <name type="scientific">Francisella tularensis subsp. novicida (strain U112)</name>
    <dbReference type="NCBI Taxonomy" id="401614"/>
    <lineage>
        <taxon>Bacteria</taxon>
        <taxon>Pseudomonadati</taxon>
        <taxon>Pseudomonadota</taxon>
        <taxon>Gammaproteobacteria</taxon>
        <taxon>Thiotrichales</taxon>
        <taxon>Francisellaceae</taxon>
        <taxon>Francisella</taxon>
    </lineage>
</organism>
<reference key="1">
    <citation type="journal article" date="2007" name="Genome Biol.">
        <title>Comparison of Francisella tularensis genomes reveals evolutionary events associated with the emergence of human pathogenic strains.</title>
        <authorList>
            <person name="Rohmer L."/>
            <person name="Fong C."/>
            <person name="Abmayr S."/>
            <person name="Wasnick M."/>
            <person name="Larson Freeman T.J."/>
            <person name="Radey M."/>
            <person name="Guina T."/>
            <person name="Svensson K."/>
            <person name="Hayden H.S."/>
            <person name="Jacobs M."/>
            <person name="Gallagher L.A."/>
            <person name="Manoil C."/>
            <person name="Ernst R.K."/>
            <person name="Drees B."/>
            <person name="Buckley D."/>
            <person name="Haugen E."/>
            <person name="Bovee D."/>
            <person name="Zhou Y."/>
            <person name="Chang J."/>
            <person name="Levy R."/>
            <person name="Lim R."/>
            <person name="Gillett W."/>
            <person name="Guenthener D."/>
            <person name="Kang A."/>
            <person name="Shaffer S.A."/>
            <person name="Taylor G."/>
            <person name="Chen J."/>
            <person name="Gallis B."/>
            <person name="D'Argenio D.A."/>
            <person name="Forsman M."/>
            <person name="Olson M.V."/>
            <person name="Goodlett D.R."/>
            <person name="Kaul R."/>
            <person name="Miller S.I."/>
            <person name="Brittnacher M.J."/>
        </authorList>
    </citation>
    <scope>NUCLEOTIDE SEQUENCE [LARGE SCALE GENOMIC DNA]</scope>
    <source>
        <strain>U112</strain>
    </source>
</reference>
<dbReference type="EMBL" id="CP000439">
    <property type="protein sequence ID" value="ABK89932.1"/>
    <property type="molecule type" value="Genomic_DNA"/>
</dbReference>
<dbReference type="SMR" id="A0Q6R7"/>
<dbReference type="KEGG" id="ftn:FTN_1045"/>
<dbReference type="KEGG" id="ftx:AW25_963"/>
<dbReference type="BioCyc" id="FTUL401614:G1G75-1088-MONOMER"/>
<dbReference type="Proteomes" id="UP000000762">
    <property type="component" value="Chromosome"/>
</dbReference>
<dbReference type="GO" id="GO:0005829">
    <property type="term" value="C:cytosol"/>
    <property type="evidence" value="ECO:0007669"/>
    <property type="project" value="TreeGrafter"/>
</dbReference>
<dbReference type="GO" id="GO:0005525">
    <property type="term" value="F:GTP binding"/>
    <property type="evidence" value="ECO:0007669"/>
    <property type="project" value="UniProtKB-UniRule"/>
</dbReference>
<dbReference type="GO" id="GO:0046872">
    <property type="term" value="F:metal ion binding"/>
    <property type="evidence" value="ECO:0007669"/>
    <property type="project" value="UniProtKB-KW"/>
</dbReference>
<dbReference type="GO" id="GO:0000917">
    <property type="term" value="P:division septum assembly"/>
    <property type="evidence" value="ECO:0007669"/>
    <property type="project" value="UniProtKB-KW"/>
</dbReference>
<dbReference type="CDD" id="cd01876">
    <property type="entry name" value="YihA_EngB"/>
    <property type="match status" value="1"/>
</dbReference>
<dbReference type="FunFam" id="3.40.50.300:FF:000098">
    <property type="entry name" value="Probable GTP-binding protein EngB"/>
    <property type="match status" value="1"/>
</dbReference>
<dbReference type="Gene3D" id="3.40.50.300">
    <property type="entry name" value="P-loop containing nucleotide triphosphate hydrolases"/>
    <property type="match status" value="1"/>
</dbReference>
<dbReference type="HAMAP" id="MF_00321">
    <property type="entry name" value="GTPase_EngB"/>
    <property type="match status" value="1"/>
</dbReference>
<dbReference type="InterPro" id="IPR030393">
    <property type="entry name" value="G_ENGB_dom"/>
</dbReference>
<dbReference type="InterPro" id="IPR006073">
    <property type="entry name" value="GTP-bd"/>
</dbReference>
<dbReference type="InterPro" id="IPR019987">
    <property type="entry name" value="GTP-bd_ribosome_bio_YsxC"/>
</dbReference>
<dbReference type="InterPro" id="IPR027417">
    <property type="entry name" value="P-loop_NTPase"/>
</dbReference>
<dbReference type="NCBIfam" id="TIGR03598">
    <property type="entry name" value="GTPase_YsxC"/>
    <property type="match status" value="1"/>
</dbReference>
<dbReference type="PANTHER" id="PTHR11649:SF13">
    <property type="entry name" value="ENGB-TYPE G DOMAIN-CONTAINING PROTEIN"/>
    <property type="match status" value="1"/>
</dbReference>
<dbReference type="PANTHER" id="PTHR11649">
    <property type="entry name" value="MSS1/TRME-RELATED GTP-BINDING PROTEIN"/>
    <property type="match status" value="1"/>
</dbReference>
<dbReference type="Pfam" id="PF01926">
    <property type="entry name" value="MMR_HSR1"/>
    <property type="match status" value="1"/>
</dbReference>
<dbReference type="SUPFAM" id="SSF52540">
    <property type="entry name" value="P-loop containing nucleoside triphosphate hydrolases"/>
    <property type="match status" value="1"/>
</dbReference>
<dbReference type="PROSITE" id="PS51706">
    <property type="entry name" value="G_ENGB"/>
    <property type="match status" value="1"/>
</dbReference>
<keyword id="KW-0131">Cell cycle</keyword>
<keyword id="KW-0132">Cell division</keyword>
<keyword id="KW-0342">GTP-binding</keyword>
<keyword id="KW-0460">Magnesium</keyword>
<keyword id="KW-0479">Metal-binding</keyword>
<keyword id="KW-0547">Nucleotide-binding</keyword>
<keyword id="KW-0717">Septation</keyword>
<name>ENGB_FRATN</name>
<gene>
    <name evidence="1" type="primary">engB</name>
    <name type="ordered locus">FTN_1045</name>
</gene>
<accession>A0Q6R7</accession>